<keyword id="KW-0072">Autophagy</keyword>
<keyword id="KW-0963">Cytoplasm</keyword>
<keyword id="KW-0968">Cytoplasmic vesicle</keyword>
<keyword id="KW-0206">Cytoskeleton</keyword>
<keyword id="KW-0449">Lipoprotein</keyword>
<keyword id="KW-0472">Membrane</keyword>
<keyword id="KW-0493">Microtubule</keyword>
<keyword id="KW-0597">Phosphoprotein</keyword>
<keyword id="KW-1185">Reference proteome</keyword>
<keyword id="KW-0833">Ubl conjugation pathway</keyword>
<accession>Q91VR7</accession>
<accession>A2AVS1</accession>
<accession>Q9DC74</accession>
<proteinExistence type="evidence at protein level"/>
<evidence type="ECO:0000250" key="1">
    <source>
        <dbReference type="UniProtKB" id="Q62625"/>
    </source>
</evidence>
<evidence type="ECO:0000250" key="2">
    <source>
        <dbReference type="UniProtKB" id="Q9H492"/>
    </source>
</evidence>
<evidence type="ECO:0000269" key="3">
    <source>
    </source>
</evidence>
<evidence type="ECO:0000269" key="4">
    <source>
    </source>
</evidence>
<evidence type="ECO:0000269" key="5">
    <source>
    </source>
</evidence>
<evidence type="ECO:0000269" key="6">
    <source>
    </source>
</evidence>
<evidence type="ECO:0000269" key="7">
    <source>
    </source>
</evidence>
<evidence type="ECO:0000305" key="8"/>
<evidence type="ECO:0000305" key="9">
    <source>
    </source>
</evidence>
<evidence type="ECO:0000312" key="10">
    <source>
        <dbReference type="MGI" id="MGI:1915661"/>
    </source>
</evidence>
<protein>
    <recommendedName>
        <fullName>Microtubule-associated protein 1 light chain 3 alpha</fullName>
    </recommendedName>
    <alternativeName>
        <fullName>Autophagy-related protein LC3 A</fullName>
    </alternativeName>
    <alternativeName>
        <fullName>Autophagy-related ubiquitin-like modifier LC3 A</fullName>
    </alternativeName>
    <alternativeName>
        <fullName>MAP1 light chain 3-like protein 1</fullName>
    </alternativeName>
    <alternativeName>
        <fullName evidence="8">Microtubule-associated proteins 1A/1B light chain 3A</fullName>
        <shortName>MAP1A/MAP1B LC3 A</shortName>
        <shortName>MAP1A/MAP1B light chain 3 A</shortName>
    </alternativeName>
</protein>
<reference key="1">
    <citation type="journal article" date="2005" name="Science">
        <title>The transcriptional landscape of the mammalian genome.</title>
        <authorList>
            <person name="Carninci P."/>
            <person name="Kasukawa T."/>
            <person name="Katayama S."/>
            <person name="Gough J."/>
            <person name="Frith M.C."/>
            <person name="Maeda N."/>
            <person name="Oyama R."/>
            <person name="Ravasi T."/>
            <person name="Lenhard B."/>
            <person name="Wells C."/>
            <person name="Kodzius R."/>
            <person name="Shimokawa K."/>
            <person name="Bajic V.B."/>
            <person name="Brenner S.E."/>
            <person name="Batalov S."/>
            <person name="Forrest A.R."/>
            <person name="Zavolan M."/>
            <person name="Davis M.J."/>
            <person name="Wilming L.G."/>
            <person name="Aidinis V."/>
            <person name="Allen J.E."/>
            <person name="Ambesi-Impiombato A."/>
            <person name="Apweiler R."/>
            <person name="Aturaliya R.N."/>
            <person name="Bailey T.L."/>
            <person name="Bansal M."/>
            <person name="Baxter L."/>
            <person name="Beisel K.W."/>
            <person name="Bersano T."/>
            <person name="Bono H."/>
            <person name="Chalk A.M."/>
            <person name="Chiu K.P."/>
            <person name="Choudhary V."/>
            <person name="Christoffels A."/>
            <person name="Clutterbuck D.R."/>
            <person name="Crowe M.L."/>
            <person name="Dalla E."/>
            <person name="Dalrymple B.P."/>
            <person name="de Bono B."/>
            <person name="Della Gatta G."/>
            <person name="di Bernardo D."/>
            <person name="Down T."/>
            <person name="Engstrom P."/>
            <person name="Fagiolini M."/>
            <person name="Faulkner G."/>
            <person name="Fletcher C.F."/>
            <person name="Fukushima T."/>
            <person name="Furuno M."/>
            <person name="Futaki S."/>
            <person name="Gariboldi M."/>
            <person name="Georgii-Hemming P."/>
            <person name="Gingeras T.R."/>
            <person name="Gojobori T."/>
            <person name="Green R.E."/>
            <person name="Gustincich S."/>
            <person name="Harbers M."/>
            <person name="Hayashi Y."/>
            <person name="Hensch T.K."/>
            <person name="Hirokawa N."/>
            <person name="Hill D."/>
            <person name="Huminiecki L."/>
            <person name="Iacono M."/>
            <person name="Ikeo K."/>
            <person name="Iwama A."/>
            <person name="Ishikawa T."/>
            <person name="Jakt M."/>
            <person name="Kanapin A."/>
            <person name="Katoh M."/>
            <person name="Kawasawa Y."/>
            <person name="Kelso J."/>
            <person name="Kitamura H."/>
            <person name="Kitano H."/>
            <person name="Kollias G."/>
            <person name="Krishnan S.P."/>
            <person name="Kruger A."/>
            <person name="Kummerfeld S.K."/>
            <person name="Kurochkin I.V."/>
            <person name="Lareau L.F."/>
            <person name="Lazarevic D."/>
            <person name="Lipovich L."/>
            <person name="Liu J."/>
            <person name="Liuni S."/>
            <person name="McWilliam S."/>
            <person name="Madan Babu M."/>
            <person name="Madera M."/>
            <person name="Marchionni L."/>
            <person name="Matsuda H."/>
            <person name="Matsuzawa S."/>
            <person name="Miki H."/>
            <person name="Mignone F."/>
            <person name="Miyake S."/>
            <person name="Morris K."/>
            <person name="Mottagui-Tabar S."/>
            <person name="Mulder N."/>
            <person name="Nakano N."/>
            <person name="Nakauchi H."/>
            <person name="Ng P."/>
            <person name="Nilsson R."/>
            <person name="Nishiguchi S."/>
            <person name="Nishikawa S."/>
            <person name="Nori F."/>
            <person name="Ohara O."/>
            <person name="Okazaki Y."/>
            <person name="Orlando V."/>
            <person name="Pang K.C."/>
            <person name="Pavan W.J."/>
            <person name="Pavesi G."/>
            <person name="Pesole G."/>
            <person name="Petrovsky N."/>
            <person name="Piazza S."/>
            <person name="Reed J."/>
            <person name="Reid J.F."/>
            <person name="Ring B.Z."/>
            <person name="Ringwald M."/>
            <person name="Rost B."/>
            <person name="Ruan Y."/>
            <person name="Salzberg S.L."/>
            <person name="Sandelin A."/>
            <person name="Schneider C."/>
            <person name="Schoenbach C."/>
            <person name="Sekiguchi K."/>
            <person name="Semple C.A."/>
            <person name="Seno S."/>
            <person name="Sessa L."/>
            <person name="Sheng Y."/>
            <person name="Shibata Y."/>
            <person name="Shimada H."/>
            <person name="Shimada K."/>
            <person name="Silva D."/>
            <person name="Sinclair B."/>
            <person name="Sperling S."/>
            <person name="Stupka E."/>
            <person name="Sugiura K."/>
            <person name="Sultana R."/>
            <person name="Takenaka Y."/>
            <person name="Taki K."/>
            <person name="Tammoja K."/>
            <person name="Tan S.L."/>
            <person name="Tang S."/>
            <person name="Taylor M.S."/>
            <person name="Tegner J."/>
            <person name="Teichmann S.A."/>
            <person name="Ueda H.R."/>
            <person name="van Nimwegen E."/>
            <person name="Verardo R."/>
            <person name="Wei C.L."/>
            <person name="Yagi K."/>
            <person name="Yamanishi H."/>
            <person name="Zabarovsky E."/>
            <person name="Zhu S."/>
            <person name="Zimmer A."/>
            <person name="Hide W."/>
            <person name="Bult C."/>
            <person name="Grimmond S.M."/>
            <person name="Teasdale R.D."/>
            <person name="Liu E.T."/>
            <person name="Brusic V."/>
            <person name="Quackenbush J."/>
            <person name="Wahlestedt C."/>
            <person name="Mattick J.S."/>
            <person name="Hume D.A."/>
            <person name="Kai C."/>
            <person name="Sasaki D."/>
            <person name="Tomaru Y."/>
            <person name="Fukuda S."/>
            <person name="Kanamori-Katayama M."/>
            <person name="Suzuki M."/>
            <person name="Aoki J."/>
            <person name="Arakawa T."/>
            <person name="Iida J."/>
            <person name="Imamura K."/>
            <person name="Itoh M."/>
            <person name="Kato T."/>
            <person name="Kawaji H."/>
            <person name="Kawagashira N."/>
            <person name="Kawashima T."/>
            <person name="Kojima M."/>
            <person name="Kondo S."/>
            <person name="Konno H."/>
            <person name="Nakano K."/>
            <person name="Ninomiya N."/>
            <person name="Nishio T."/>
            <person name="Okada M."/>
            <person name="Plessy C."/>
            <person name="Shibata K."/>
            <person name="Shiraki T."/>
            <person name="Suzuki S."/>
            <person name="Tagami M."/>
            <person name="Waki K."/>
            <person name="Watahiki A."/>
            <person name="Okamura-Oho Y."/>
            <person name="Suzuki H."/>
            <person name="Kawai J."/>
            <person name="Hayashizaki Y."/>
        </authorList>
    </citation>
    <scope>NUCLEOTIDE SEQUENCE [LARGE SCALE MRNA]</scope>
    <source>
        <strain>C57BL/6J</strain>
        <tissue>Heart</tissue>
    </source>
</reference>
<reference key="2">
    <citation type="journal article" date="2009" name="PLoS Biol.">
        <title>Lineage-specific biology revealed by a finished genome assembly of the mouse.</title>
        <authorList>
            <person name="Church D.M."/>
            <person name="Goodstadt L."/>
            <person name="Hillier L.W."/>
            <person name="Zody M.C."/>
            <person name="Goldstein S."/>
            <person name="She X."/>
            <person name="Bult C.J."/>
            <person name="Agarwala R."/>
            <person name="Cherry J.L."/>
            <person name="DiCuccio M."/>
            <person name="Hlavina W."/>
            <person name="Kapustin Y."/>
            <person name="Meric P."/>
            <person name="Maglott D."/>
            <person name="Birtle Z."/>
            <person name="Marques A.C."/>
            <person name="Graves T."/>
            <person name="Zhou S."/>
            <person name="Teague B."/>
            <person name="Potamousis K."/>
            <person name="Churas C."/>
            <person name="Place M."/>
            <person name="Herschleb J."/>
            <person name="Runnheim R."/>
            <person name="Forrest D."/>
            <person name="Amos-Landgraf J."/>
            <person name="Schwartz D.C."/>
            <person name="Cheng Z."/>
            <person name="Lindblad-Toh K."/>
            <person name="Eichler E.E."/>
            <person name="Ponting C.P."/>
        </authorList>
    </citation>
    <scope>NUCLEOTIDE SEQUENCE [LARGE SCALE GENOMIC DNA]</scope>
    <source>
        <strain>C57BL/6J</strain>
    </source>
</reference>
<reference key="3">
    <citation type="journal article" date="2004" name="Genome Res.">
        <title>The status, quality, and expansion of the NIH full-length cDNA project: the Mammalian Gene Collection (MGC).</title>
        <authorList>
            <consortium name="The MGC Project Team"/>
        </authorList>
    </citation>
    <scope>NUCLEOTIDE SEQUENCE [LARGE SCALE MRNA]</scope>
    <source>
        <strain>NMRI</strain>
        <tissue>Mammary tumor</tissue>
    </source>
</reference>
<reference key="4">
    <citation type="journal article" date="2001" name="J. Cell Biol.">
        <title>Dissection of autophagosome formation using Apg5-deficient mouse embryonic stem cells.</title>
        <authorList>
            <person name="Mizushima N."/>
            <person name="Yamamoto A."/>
            <person name="Hatano M."/>
            <person name="Kobayashi Y."/>
            <person name="Kabeya Y."/>
            <person name="Suzuki K."/>
            <person name="Tokuhisa T."/>
            <person name="Ohsumi Y."/>
            <person name="Yoshimori T."/>
        </authorList>
    </citation>
    <scope>SUBCELLULAR LOCATION</scope>
</reference>
<reference key="5">
    <citation type="journal article" date="2002" name="Biochem. Biophys. Res. Commun.">
        <title>Mammalian Apg12p, but not the Apg12p.Apg5p conjugate, facilitates LC3 processing.</title>
        <authorList>
            <person name="Tanida I."/>
            <person name="Nishitani T."/>
            <person name="Nemoto T."/>
            <person name="Ueno T."/>
            <person name="Kominami E."/>
        </authorList>
    </citation>
    <scope>SUBCELLULAR LOCATION</scope>
    <scope>PROTEOLYTIC CLEAVAGE</scope>
</reference>
<reference key="6">
    <citation type="journal article" date="2003" name="J. Biol. Chem.">
        <title>A single protease, Apg4B, is specific for the autophagy-related ubiquitin-like proteins GATE-16, MAP1-LC3, GABARAP, and Apg8L.</title>
        <authorList>
            <person name="Hemelaar J."/>
            <person name="Lelyveld V.S."/>
            <person name="Kessler B.M."/>
            <person name="Ploegh H.L."/>
        </authorList>
    </citation>
    <scope>CLEAVAGE BY ATG4B</scope>
    <scope>SUBCELLULAR LOCATION</scope>
</reference>
<reference key="7">
    <citation type="journal article" date="2010" name="Cell">
        <title>A tissue-specific atlas of mouse protein phosphorylation and expression.</title>
        <authorList>
            <person name="Huttlin E.L."/>
            <person name="Jedrychowski M.P."/>
            <person name="Elias J.E."/>
            <person name="Goswami T."/>
            <person name="Rad R."/>
            <person name="Beausoleil S.A."/>
            <person name="Villen J."/>
            <person name="Haas W."/>
            <person name="Sowa M.E."/>
            <person name="Gygi S.P."/>
        </authorList>
    </citation>
    <scope>IDENTIFICATION BY MASS SPECTROMETRY [LARGE SCALE ANALYSIS]</scope>
    <source>
        <tissue>Brain</tissue>
    </source>
</reference>
<reference key="8">
    <citation type="journal article" date="2021" name="Cell Death Differ.">
        <title>ATG4D is the main ATG8 delipidating enzyme in mammalian cells and protects against cerebellar neurodegeneration.</title>
        <authorList>
            <person name="Tamargo-Gomez I."/>
            <person name="Martinez-Garcia G.G."/>
            <person name="Suarez M.F."/>
            <person name="Rey V."/>
            <person name="Fueyo A."/>
            <person name="Codina-Martinez H."/>
            <person name="Bretones G."/>
            <person name="Caravia X.M."/>
            <person name="Morel E."/>
            <person name="Dupont N."/>
            <person name="Cabo R."/>
            <person name="Tomas-Zapico C."/>
            <person name="Souquere S."/>
            <person name="Pierron G."/>
            <person name="Codogno P."/>
            <person name="Lopez-Otin C."/>
            <person name="Fernandez A.F."/>
            <person name="Marino G."/>
        </authorList>
    </citation>
    <scope>LIPIDATION</scope>
    <scope>DELIPIDATION</scope>
</reference>
<reference key="9">
    <citation type="journal article" date="2021" name="EMBO Rep.">
        <title>Role of FAM134 paralogues in endoplasmic reticulum remodeling, ER-phagy, and Collagen quality control.</title>
        <authorList>
            <person name="Reggio A."/>
            <person name="Buonomo V."/>
            <person name="Berkane R."/>
            <person name="Bhaskara R.M."/>
            <person name="Tellechea M."/>
            <person name="Peluso I."/>
            <person name="Polishchuk E."/>
            <person name="Di Lorenzo G."/>
            <person name="Cirillo C."/>
            <person name="Esposito M."/>
            <person name="Hussain A."/>
            <person name="Huebner A.K."/>
            <person name="Huebner C.A."/>
            <person name="Settembre C."/>
            <person name="Hummer G."/>
            <person name="Grumati P."/>
            <person name="Stolz A."/>
        </authorList>
    </citation>
    <scope>INTERACTION WITH RETREG1; RETREG2 AND RETREG3</scope>
</reference>
<name>MLP3A_MOUSE</name>
<dbReference type="EMBL" id="AK003122">
    <property type="protein sequence ID" value="BAB22582.1"/>
    <property type="molecule type" value="mRNA"/>
</dbReference>
<dbReference type="EMBL" id="AL929588">
    <property type="status" value="NOT_ANNOTATED_CDS"/>
    <property type="molecule type" value="Genomic_DNA"/>
</dbReference>
<dbReference type="EMBL" id="BC010596">
    <property type="protein sequence ID" value="AAH10596.1"/>
    <property type="molecule type" value="mRNA"/>
</dbReference>
<dbReference type="CCDS" id="CCDS16945.1"/>
<dbReference type="RefSeq" id="NP_080011.1">
    <property type="nucleotide sequence ID" value="NM_025735.3"/>
</dbReference>
<dbReference type="SMR" id="Q91VR7"/>
<dbReference type="BioGRID" id="211680">
    <property type="interactions" value="28"/>
</dbReference>
<dbReference type="FunCoup" id="Q91VR7">
    <property type="interactions" value="651"/>
</dbReference>
<dbReference type="IntAct" id="Q91VR7">
    <property type="interactions" value="5"/>
</dbReference>
<dbReference type="MINT" id="Q91VR7"/>
<dbReference type="STRING" id="10090.ENSMUSP00000029128"/>
<dbReference type="GlyGen" id="Q91VR7">
    <property type="glycosylation" value="1 site, 1 O-linked glycan (1 site)"/>
</dbReference>
<dbReference type="iPTMnet" id="Q91VR7"/>
<dbReference type="MetOSite" id="Q91VR7"/>
<dbReference type="PhosphoSitePlus" id="Q91VR7"/>
<dbReference type="SwissPalm" id="Q91VR7"/>
<dbReference type="PaxDb" id="10090-ENSMUSP00000029128"/>
<dbReference type="PeptideAtlas" id="Q91VR7"/>
<dbReference type="ProteomicsDB" id="295915"/>
<dbReference type="Pumba" id="Q91VR7"/>
<dbReference type="Antibodypedia" id="1970">
    <property type="antibodies" value="1369 antibodies from 44 providers"/>
</dbReference>
<dbReference type="DNASU" id="66734"/>
<dbReference type="Ensembl" id="ENSMUST00000029128.4">
    <property type="protein sequence ID" value="ENSMUSP00000029128.4"/>
    <property type="gene ID" value="ENSMUSG00000027602.10"/>
</dbReference>
<dbReference type="GeneID" id="66734"/>
<dbReference type="KEGG" id="mmu:66734"/>
<dbReference type="UCSC" id="uc012cha.2">
    <property type="organism name" value="mouse"/>
</dbReference>
<dbReference type="AGR" id="MGI:1915661"/>
<dbReference type="CTD" id="84557"/>
<dbReference type="MGI" id="MGI:1915661">
    <property type="gene designation" value="Map1lc3a"/>
</dbReference>
<dbReference type="VEuPathDB" id="HostDB:ENSMUSG00000027602"/>
<dbReference type="eggNOG" id="KOG1654">
    <property type="taxonomic scope" value="Eukaryota"/>
</dbReference>
<dbReference type="GeneTree" id="ENSGT00940000158853"/>
<dbReference type="HOGENOM" id="CLU_119276_1_0_1"/>
<dbReference type="InParanoid" id="Q91VR7"/>
<dbReference type="OMA" id="VNERSMV"/>
<dbReference type="OrthoDB" id="6738456at2759"/>
<dbReference type="PhylomeDB" id="Q91VR7"/>
<dbReference type="TreeFam" id="TF312964"/>
<dbReference type="Reactome" id="R-MMU-1632852">
    <property type="pathway name" value="Macroautophagy"/>
</dbReference>
<dbReference type="Reactome" id="R-MMU-5205685">
    <property type="pathway name" value="PINK1-PRKN Mediated Mitophagy"/>
</dbReference>
<dbReference type="Reactome" id="R-MMU-8934903">
    <property type="pathway name" value="Receptor Mediated Mitophagy"/>
</dbReference>
<dbReference type="BioGRID-ORCS" id="66734">
    <property type="hits" value="4 hits in 77 CRISPR screens"/>
</dbReference>
<dbReference type="CD-CODE" id="CE726F99">
    <property type="entry name" value="Postsynaptic density"/>
</dbReference>
<dbReference type="ChiTaRS" id="Map1lc3a">
    <property type="organism name" value="mouse"/>
</dbReference>
<dbReference type="PRO" id="PR:Q91VR7"/>
<dbReference type="Proteomes" id="UP000000589">
    <property type="component" value="Chromosome 2"/>
</dbReference>
<dbReference type="RNAct" id="Q91VR7">
    <property type="molecule type" value="protein"/>
</dbReference>
<dbReference type="Bgee" id="ENSMUSG00000027602">
    <property type="expression patterns" value="Expressed in lip and 254 other cell types or tissues"/>
</dbReference>
<dbReference type="GO" id="GO:0044754">
    <property type="term" value="C:autolysosome"/>
    <property type="evidence" value="ECO:0000266"/>
    <property type="project" value="MGI"/>
</dbReference>
<dbReference type="GO" id="GO:0005776">
    <property type="term" value="C:autophagosome"/>
    <property type="evidence" value="ECO:0000314"/>
    <property type="project" value="MGI"/>
</dbReference>
<dbReference type="GO" id="GO:0000421">
    <property type="term" value="C:autophagosome membrane"/>
    <property type="evidence" value="ECO:0000314"/>
    <property type="project" value="MGI"/>
</dbReference>
<dbReference type="GO" id="GO:0005737">
    <property type="term" value="C:cytoplasm"/>
    <property type="evidence" value="ECO:0000250"/>
    <property type="project" value="UniProtKB"/>
</dbReference>
<dbReference type="GO" id="GO:0005829">
    <property type="term" value="C:cytosol"/>
    <property type="evidence" value="ECO:0007669"/>
    <property type="project" value="Ensembl"/>
</dbReference>
<dbReference type="GO" id="GO:0098978">
    <property type="term" value="C:glutamatergic synapse"/>
    <property type="evidence" value="ECO:0007669"/>
    <property type="project" value="Ensembl"/>
</dbReference>
<dbReference type="GO" id="GO:0005770">
    <property type="term" value="C:late endosome"/>
    <property type="evidence" value="ECO:0007669"/>
    <property type="project" value="Ensembl"/>
</dbReference>
<dbReference type="GO" id="GO:0005874">
    <property type="term" value="C:microtubule"/>
    <property type="evidence" value="ECO:0007669"/>
    <property type="project" value="UniProtKB-KW"/>
</dbReference>
<dbReference type="GO" id="GO:0015630">
    <property type="term" value="C:microtubule cytoskeleton"/>
    <property type="evidence" value="ECO:0000266"/>
    <property type="project" value="MGI"/>
</dbReference>
<dbReference type="GO" id="GO:0031090">
    <property type="term" value="C:organelle membrane"/>
    <property type="evidence" value="ECO:0000250"/>
    <property type="project" value="UniProtKB"/>
</dbReference>
<dbReference type="GO" id="GO:0008017">
    <property type="term" value="F:microtubule binding"/>
    <property type="evidence" value="ECO:0000266"/>
    <property type="project" value="MGI"/>
</dbReference>
<dbReference type="GO" id="GO:0005543">
    <property type="term" value="F:phospholipid binding"/>
    <property type="evidence" value="ECO:0007669"/>
    <property type="project" value="Ensembl"/>
</dbReference>
<dbReference type="GO" id="GO:0031625">
    <property type="term" value="F:ubiquitin protein ligase binding"/>
    <property type="evidence" value="ECO:0007669"/>
    <property type="project" value="Ensembl"/>
</dbReference>
<dbReference type="GO" id="GO:0000045">
    <property type="term" value="P:autophagosome assembly"/>
    <property type="evidence" value="ECO:0000250"/>
    <property type="project" value="UniProtKB"/>
</dbReference>
<dbReference type="GO" id="GO:0097352">
    <property type="term" value="P:autophagosome maturation"/>
    <property type="evidence" value="ECO:0007669"/>
    <property type="project" value="Ensembl"/>
</dbReference>
<dbReference type="GO" id="GO:0000422">
    <property type="term" value="P:autophagy of mitochondrion"/>
    <property type="evidence" value="ECO:0000266"/>
    <property type="project" value="MGI"/>
</dbReference>
<dbReference type="GO" id="GO:0034198">
    <property type="term" value="P:cellular response to amino acid starvation"/>
    <property type="evidence" value="ECO:0007669"/>
    <property type="project" value="Ensembl"/>
</dbReference>
<dbReference type="GO" id="GO:0071280">
    <property type="term" value="P:cellular response to copper ion"/>
    <property type="evidence" value="ECO:0007669"/>
    <property type="project" value="Ensembl"/>
</dbReference>
<dbReference type="GO" id="GO:0070301">
    <property type="term" value="P:cellular response to hydrogen peroxide"/>
    <property type="evidence" value="ECO:0007669"/>
    <property type="project" value="Ensembl"/>
</dbReference>
<dbReference type="GO" id="GO:0090650">
    <property type="term" value="P:cellular response to oxygen-glucose deprivation"/>
    <property type="evidence" value="ECO:0007669"/>
    <property type="project" value="Ensembl"/>
</dbReference>
<dbReference type="GO" id="GO:0007254">
    <property type="term" value="P:JNK cascade"/>
    <property type="evidence" value="ECO:0007669"/>
    <property type="project" value="Ensembl"/>
</dbReference>
<dbReference type="GO" id="GO:0038066">
    <property type="term" value="P:p38MAPK cascade"/>
    <property type="evidence" value="ECO:0007669"/>
    <property type="project" value="Ensembl"/>
</dbReference>
<dbReference type="GO" id="GO:0010040">
    <property type="term" value="P:response to iron(II) ion"/>
    <property type="evidence" value="ECO:0007669"/>
    <property type="project" value="Ensembl"/>
</dbReference>
<dbReference type="GO" id="GO:0010288">
    <property type="term" value="P:response to lead ion"/>
    <property type="evidence" value="ECO:0007669"/>
    <property type="project" value="Ensembl"/>
</dbReference>
<dbReference type="GO" id="GO:0060395">
    <property type="term" value="P:SMAD protein signal transduction"/>
    <property type="evidence" value="ECO:0007669"/>
    <property type="project" value="Ensembl"/>
</dbReference>
<dbReference type="CDD" id="cd17234">
    <property type="entry name" value="Ubl_ATG8_MAP1LC3A"/>
    <property type="match status" value="1"/>
</dbReference>
<dbReference type="FunFam" id="3.10.20.90:FF:000059">
    <property type="entry name" value="Microtubule-associated proteins 1A/1B light chain 3B"/>
    <property type="match status" value="1"/>
</dbReference>
<dbReference type="Gene3D" id="3.10.20.90">
    <property type="entry name" value="Phosphatidylinositol 3-kinase Catalytic Subunit, Chain A, domain 1"/>
    <property type="match status" value="1"/>
</dbReference>
<dbReference type="InterPro" id="IPR004241">
    <property type="entry name" value="Atg8-like"/>
</dbReference>
<dbReference type="InterPro" id="IPR029071">
    <property type="entry name" value="Ubiquitin-like_domsf"/>
</dbReference>
<dbReference type="PANTHER" id="PTHR10969">
    <property type="entry name" value="MICROTUBULE-ASSOCIATED PROTEINS 1A/1B LIGHT CHAIN 3-RELATED"/>
    <property type="match status" value="1"/>
</dbReference>
<dbReference type="Pfam" id="PF02991">
    <property type="entry name" value="ATG8"/>
    <property type="match status" value="1"/>
</dbReference>
<dbReference type="SUPFAM" id="SSF54236">
    <property type="entry name" value="Ubiquitin-like"/>
    <property type="match status" value="1"/>
</dbReference>
<feature type="chain" id="PRO_0000017194" description="Microtubule-associated protein 1 light chain 3 alpha">
    <location>
        <begin position="1"/>
        <end position="120"/>
    </location>
</feature>
<feature type="propeptide" id="PRO_0000017195" description="Removed in mature form" evidence="8">
    <location>
        <position position="121"/>
    </location>
</feature>
<feature type="region of interest" description="Important for interaction with ATG13 and for autophagosome formation" evidence="2">
    <location>
        <begin position="49"/>
        <end position="53"/>
    </location>
</feature>
<feature type="site" description="Cleavage; by ATG4B" evidence="2">
    <location>
        <begin position="120"/>
        <end position="121"/>
    </location>
</feature>
<feature type="modified residue" description="Phosphoserine; by PKA" evidence="2">
    <location>
        <position position="12"/>
    </location>
</feature>
<feature type="lipid moiety-binding region" description="Phosphatidylethanolamine amidated glycine; alternate" evidence="2">
    <location>
        <position position="120"/>
    </location>
</feature>
<feature type="lipid moiety-binding region" description="Phosphatidylserine amidated glycine; alternate" evidence="2">
    <location>
        <position position="120"/>
    </location>
</feature>
<feature type="sequence conflict" description="In Ref. 1; BAB22582." evidence="8" ref="1">
    <original>S</original>
    <variation>T</variation>
    <location>
        <position position="12"/>
    </location>
</feature>
<comment type="function">
    <text evidence="2">Ubiquitin-like modifier involved in formation of autophagosomal vacuoles (autophagosomes). While LC3s are involved in elongation of the phagophore membrane, the GABARAP/GATE-16 subfamily is essential for a later stage in autophagosome maturation. Through its interaction with the reticulophagy receptor TEX264, participates in the remodeling of subdomains of the endoplasmic reticulum into autophagosomes upon nutrient stress, which then fuse with lysosomes for endoplasmic reticulum turnover.</text>
</comment>
<comment type="subunit">
    <text evidence="1 2 7">3 different light chains, LC1 (a cleavage product of MAP1B), LC2 (a cleavage product of MAP1A) and LC3 (produced by one of the MAP1LC3 genes), can associate with the MAP1A or MAP1B heavy chains (By similarity). Interacts with TP53INP1 and TP53INP2 (By similarity). Directly interacts with SQSTM1; this interaction leads to MAP1LC3A recruitment to inclusion bodies containing polyubiquitinated protein aggregates and to inclusion body degradation by autophagy (By similarity). Interacts with ATG13 (By similarity). Interacts with ULK1 (By similarity). Interacts with TBC1D5 (By similarity). Found in a complex with UBQLN1 and UBQLN2 (By similarity). Interacts with UBQLN4 (via STI1 1 and 2 domains) (By similarity). Interacts with UBQLN1 in the presence of UBQLN4 (By similarity). Interacts with TRIM5 (By similarity). Interacts with MEFV (By similarity). Interacts with reticulophagy regulators RETREG1, RETREG2 and RETREG3 (PubMed:34338405). Interacts with PICALM (By similarity). Interacts with the reticulophagy receptor TEX264 (By similarity). Interacts with MOAP1 (via LIR motif) (By similarity). Interacts with Irgm1 (By similarity). Interacts with ATG3 (By similarity). Interacts with SPART (By similarity).</text>
</comment>
<comment type="interaction">
    <interactant intactId="EBI-2933755">
        <id>Q91VR7</id>
    </interactant>
    <interactant intactId="EBI-2298259">
        <id>Q811T9</id>
        <label>Disc1</label>
    </interactant>
    <organismsDiffer>false</organismsDiffer>
    <experiments>2</experiments>
</comment>
<comment type="subcellular location">
    <subcellularLocation>
        <location evidence="5">Endomembrane system</location>
        <topology evidence="2">Lipid-anchor</topology>
    </subcellularLocation>
    <subcellularLocation>
        <location evidence="3 4">Cytoplasmic vesicle</location>
        <location evidence="3 4">Autophagosome membrane</location>
        <topology evidence="2">Lipid-anchor</topology>
    </subcellularLocation>
    <subcellularLocation>
        <location evidence="2">Cytoplasmic vesicle</location>
        <location evidence="2">Autophagosome</location>
    </subcellularLocation>
    <subcellularLocation>
        <location evidence="9">Cytoplasm</location>
        <location evidence="9">Cytoskeleton</location>
    </subcellularLocation>
    <text evidence="2">LC3-II binds to the autophagic membranes.</text>
</comment>
<comment type="PTM">
    <text evidence="2 4 5 6">The precursor molecule is cleaved by ATG4 (ATG4A, ATG4B, ATG4C or ATG4D) to expose the glycine at the C-terminus and form the cytosolic form, LC3-I (PubMed:12207896, PubMed:14530254). The processed form is then activated by APG7L/ATG7, transferred to ATG3 and conjugated to phosphatidylethanolamine (PE) phospholipid to form the membrane-bound form, LC3-II (By similarity). During non-canonical autophagy, the processed form is conjugated to phosphatidylserine (PS) phospholipid (By similarity). ATG4 proteins also mediate the delipidation of PE-conjugated forms (PubMed:33795848). In addition, ATG4B and ATG4D mediate delipidation of ATG8 proteins conjugated to PS during non-canonical autophagy (By similarity). ATG4B constitutes the major protein for proteolytic activation (By similarity). ATG4D is the main enzyme for delipidation activity (PubMed:33795848).</text>
</comment>
<comment type="PTM">
    <text evidence="2">Phosphorylation at Ser-12 by PKA inhibits conjugation to phosphatidylethanolamine (PE).</text>
</comment>
<comment type="similarity">
    <text evidence="8">Belongs to the ATG8 family.</text>
</comment>
<sequence>MPSDRPFKQRRSFADRCKEVQQIRDQHPSKIPVIIERYKGEKQLPVLDKTKFLVPDHVNMSELVKIIRRRLQLNPTQAFFLLVNQHSMVSVSTPIADIYEQEKDEDGFLYMVYASQETFGF</sequence>
<gene>
    <name evidence="10" type="primary">Map1lc3a</name>
</gene>
<organism>
    <name type="scientific">Mus musculus</name>
    <name type="common">Mouse</name>
    <dbReference type="NCBI Taxonomy" id="10090"/>
    <lineage>
        <taxon>Eukaryota</taxon>
        <taxon>Metazoa</taxon>
        <taxon>Chordata</taxon>
        <taxon>Craniata</taxon>
        <taxon>Vertebrata</taxon>
        <taxon>Euteleostomi</taxon>
        <taxon>Mammalia</taxon>
        <taxon>Eutheria</taxon>
        <taxon>Euarchontoglires</taxon>
        <taxon>Glires</taxon>
        <taxon>Rodentia</taxon>
        <taxon>Myomorpha</taxon>
        <taxon>Muroidea</taxon>
        <taxon>Muridae</taxon>
        <taxon>Murinae</taxon>
        <taxon>Mus</taxon>
        <taxon>Mus</taxon>
    </lineage>
</organism>